<proteinExistence type="inferred from homology"/>
<protein>
    <recommendedName>
        <fullName evidence="1">Glycine cleavage system H protein</fullName>
    </recommendedName>
</protein>
<name>GCSH_NITV4</name>
<gene>
    <name evidence="1" type="primary">gcvH</name>
    <name type="ordered locus">Dvul_1650</name>
</gene>
<sequence length="127" mass="13614">MSIPAELKYSKTHEWIRIEGDEAVIGITHFAQEQLGDLTFVDLPGVGDTLDVEQEMGSVESVKAASELYAPVAGEVIAVNDALASAPELVNQSPYTEGWMLRVKLAATPEDLLDATAYGELVASEAH</sequence>
<reference key="1">
    <citation type="journal article" date="2009" name="Environ. Microbiol.">
        <title>Contribution of mobile genetic elements to Desulfovibrio vulgaris genome plasticity.</title>
        <authorList>
            <person name="Walker C.B."/>
            <person name="Stolyar S."/>
            <person name="Chivian D."/>
            <person name="Pinel N."/>
            <person name="Gabster J.A."/>
            <person name="Dehal P.S."/>
            <person name="He Z."/>
            <person name="Yang Z.K."/>
            <person name="Yen H.C."/>
            <person name="Zhou J."/>
            <person name="Wall J.D."/>
            <person name="Hazen T.C."/>
            <person name="Arkin A.P."/>
            <person name="Stahl D.A."/>
        </authorList>
    </citation>
    <scope>NUCLEOTIDE SEQUENCE [LARGE SCALE GENOMIC DNA]</scope>
    <source>
        <strain>DP4</strain>
    </source>
</reference>
<keyword id="KW-0450">Lipoyl</keyword>
<evidence type="ECO:0000255" key="1">
    <source>
        <dbReference type="HAMAP-Rule" id="MF_00272"/>
    </source>
</evidence>
<evidence type="ECO:0000255" key="2">
    <source>
        <dbReference type="PROSITE-ProRule" id="PRU01066"/>
    </source>
</evidence>
<accession>A1VE01</accession>
<organism>
    <name type="scientific">Nitratidesulfovibrio vulgaris (strain DP4)</name>
    <name type="common">Desulfovibrio vulgaris</name>
    <dbReference type="NCBI Taxonomy" id="391774"/>
    <lineage>
        <taxon>Bacteria</taxon>
        <taxon>Pseudomonadati</taxon>
        <taxon>Thermodesulfobacteriota</taxon>
        <taxon>Desulfovibrionia</taxon>
        <taxon>Desulfovibrionales</taxon>
        <taxon>Desulfovibrionaceae</taxon>
        <taxon>Nitratidesulfovibrio</taxon>
    </lineage>
</organism>
<feature type="chain" id="PRO_0000302373" description="Glycine cleavage system H protein">
    <location>
        <begin position="1"/>
        <end position="127"/>
    </location>
</feature>
<feature type="domain" description="Lipoyl-binding" evidence="2">
    <location>
        <begin position="22"/>
        <end position="104"/>
    </location>
</feature>
<feature type="modified residue" description="N6-lipoyllysine" evidence="1">
    <location>
        <position position="63"/>
    </location>
</feature>
<dbReference type="EMBL" id="CP000527">
    <property type="protein sequence ID" value="ABM28667.1"/>
    <property type="molecule type" value="Genomic_DNA"/>
</dbReference>
<dbReference type="RefSeq" id="WP_010938719.1">
    <property type="nucleotide sequence ID" value="NC_008751.1"/>
</dbReference>
<dbReference type="SMR" id="A1VE01"/>
<dbReference type="KEGG" id="dvl:Dvul_1650"/>
<dbReference type="HOGENOM" id="CLU_097408_2_2_7"/>
<dbReference type="Proteomes" id="UP000009173">
    <property type="component" value="Chromosome"/>
</dbReference>
<dbReference type="GO" id="GO:0005829">
    <property type="term" value="C:cytosol"/>
    <property type="evidence" value="ECO:0007669"/>
    <property type="project" value="TreeGrafter"/>
</dbReference>
<dbReference type="GO" id="GO:0005960">
    <property type="term" value="C:glycine cleavage complex"/>
    <property type="evidence" value="ECO:0007669"/>
    <property type="project" value="InterPro"/>
</dbReference>
<dbReference type="GO" id="GO:0019464">
    <property type="term" value="P:glycine decarboxylation via glycine cleavage system"/>
    <property type="evidence" value="ECO:0007669"/>
    <property type="project" value="UniProtKB-UniRule"/>
</dbReference>
<dbReference type="CDD" id="cd06848">
    <property type="entry name" value="GCS_H"/>
    <property type="match status" value="1"/>
</dbReference>
<dbReference type="Gene3D" id="2.40.50.100">
    <property type="match status" value="1"/>
</dbReference>
<dbReference type="HAMAP" id="MF_00272">
    <property type="entry name" value="GcvH"/>
    <property type="match status" value="1"/>
</dbReference>
<dbReference type="InterPro" id="IPR003016">
    <property type="entry name" value="2-oxoA_DH_lipoyl-BS"/>
</dbReference>
<dbReference type="InterPro" id="IPR000089">
    <property type="entry name" value="Biotin_lipoyl"/>
</dbReference>
<dbReference type="InterPro" id="IPR002930">
    <property type="entry name" value="GCV_H"/>
</dbReference>
<dbReference type="InterPro" id="IPR033753">
    <property type="entry name" value="GCV_H/Fam206"/>
</dbReference>
<dbReference type="InterPro" id="IPR017453">
    <property type="entry name" value="GCV_H_sub"/>
</dbReference>
<dbReference type="InterPro" id="IPR011053">
    <property type="entry name" value="Single_hybrid_motif"/>
</dbReference>
<dbReference type="NCBIfam" id="TIGR00527">
    <property type="entry name" value="gcvH"/>
    <property type="match status" value="1"/>
</dbReference>
<dbReference type="NCBIfam" id="NF002270">
    <property type="entry name" value="PRK01202.1"/>
    <property type="match status" value="1"/>
</dbReference>
<dbReference type="PANTHER" id="PTHR11715">
    <property type="entry name" value="GLYCINE CLEAVAGE SYSTEM H PROTEIN"/>
    <property type="match status" value="1"/>
</dbReference>
<dbReference type="PANTHER" id="PTHR11715:SF3">
    <property type="entry name" value="GLYCINE CLEAVAGE SYSTEM H PROTEIN-RELATED"/>
    <property type="match status" value="1"/>
</dbReference>
<dbReference type="Pfam" id="PF01597">
    <property type="entry name" value="GCV_H"/>
    <property type="match status" value="1"/>
</dbReference>
<dbReference type="SUPFAM" id="SSF51230">
    <property type="entry name" value="Single hybrid motif"/>
    <property type="match status" value="1"/>
</dbReference>
<dbReference type="PROSITE" id="PS50968">
    <property type="entry name" value="BIOTINYL_LIPOYL"/>
    <property type="match status" value="1"/>
</dbReference>
<dbReference type="PROSITE" id="PS00189">
    <property type="entry name" value="LIPOYL"/>
    <property type="match status" value="1"/>
</dbReference>
<comment type="function">
    <text evidence="1">The glycine cleavage system catalyzes the degradation of glycine. The H protein shuttles the methylamine group of glycine from the P protein to the T protein.</text>
</comment>
<comment type="cofactor">
    <cofactor evidence="1">
        <name>(R)-lipoate</name>
        <dbReference type="ChEBI" id="CHEBI:83088"/>
    </cofactor>
    <text evidence="1">Binds 1 lipoyl cofactor covalently.</text>
</comment>
<comment type="subunit">
    <text evidence="1">The glycine cleavage system is composed of four proteins: P, T, L and H.</text>
</comment>
<comment type="similarity">
    <text evidence="1">Belongs to the GcvH family.</text>
</comment>